<reference key="1">
    <citation type="journal article" date="2002" name="Nucleic Acids Res.">
        <title>The complete genomic sequence of Mycoplasma penetrans, an intracellular bacterial pathogen in humans.</title>
        <authorList>
            <person name="Sasaki Y."/>
            <person name="Ishikawa J."/>
            <person name="Yamashita A."/>
            <person name="Oshima K."/>
            <person name="Kenri T."/>
            <person name="Furuya K."/>
            <person name="Yoshino C."/>
            <person name="Horino A."/>
            <person name="Shiba T."/>
            <person name="Sasaki T."/>
            <person name="Hattori M."/>
        </authorList>
    </citation>
    <scope>NUCLEOTIDE SEQUENCE [LARGE SCALE GENOMIC DNA]</scope>
    <source>
        <strain>HF-2</strain>
    </source>
</reference>
<organism>
    <name type="scientific">Malacoplasma penetrans (strain HF-2)</name>
    <name type="common">Mycoplasma penetrans</name>
    <dbReference type="NCBI Taxonomy" id="272633"/>
    <lineage>
        <taxon>Bacteria</taxon>
        <taxon>Bacillati</taxon>
        <taxon>Mycoplasmatota</taxon>
        <taxon>Mycoplasmoidales</taxon>
        <taxon>Mycoplasmoidaceae</taxon>
        <taxon>Malacoplasma</taxon>
    </lineage>
</organism>
<keyword id="KW-1185">Reference proteome</keyword>
<keyword id="KW-0687">Ribonucleoprotein</keyword>
<keyword id="KW-0689">Ribosomal protein</keyword>
<keyword id="KW-0694">RNA-binding</keyword>
<keyword id="KW-0699">rRNA-binding</keyword>
<gene>
    <name evidence="1" type="primary">rplT</name>
    <name type="ordered locus">MYPE9150</name>
</gene>
<accession>Q8EUK7</accession>
<feature type="chain" id="PRO_0000177186" description="Large ribosomal subunit protein bL20">
    <location>
        <begin position="1"/>
        <end position="115"/>
    </location>
</feature>
<dbReference type="EMBL" id="BA000026">
    <property type="protein sequence ID" value="BAC44705.1"/>
    <property type="molecule type" value="Genomic_DNA"/>
</dbReference>
<dbReference type="RefSeq" id="WP_011077734.1">
    <property type="nucleotide sequence ID" value="NC_004432.1"/>
</dbReference>
<dbReference type="SMR" id="Q8EUK7"/>
<dbReference type="FunCoup" id="Q8EUK7">
    <property type="interactions" value="255"/>
</dbReference>
<dbReference type="STRING" id="272633.gene:10732036"/>
<dbReference type="KEGG" id="mpe:MYPE9150"/>
<dbReference type="eggNOG" id="COG0292">
    <property type="taxonomic scope" value="Bacteria"/>
</dbReference>
<dbReference type="HOGENOM" id="CLU_123265_0_1_14"/>
<dbReference type="InParanoid" id="Q8EUK7"/>
<dbReference type="Proteomes" id="UP000002522">
    <property type="component" value="Chromosome"/>
</dbReference>
<dbReference type="GO" id="GO:1990904">
    <property type="term" value="C:ribonucleoprotein complex"/>
    <property type="evidence" value="ECO:0007669"/>
    <property type="project" value="UniProtKB-KW"/>
</dbReference>
<dbReference type="GO" id="GO:0005840">
    <property type="term" value="C:ribosome"/>
    <property type="evidence" value="ECO:0007669"/>
    <property type="project" value="UniProtKB-KW"/>
</dbReference>
<dbReference type="GO" id="GO:0019843">
    <property type="term" value="F:rRNA binding"/>
    <property type="evidence" value="ECO:0007669"/>
    <property type="project" value="UniProtKB-UniRule"/>
</dbReference>
<dbReference type="GO" id="GO:0003735">
    <property type="term" value="F:structural constituent of ribosome"/>
    <property type="evidence" value="ECO:0007669"/>
    <property type="project" value="InterPro"/>
</dbReference>
<dbReference type="GO" id="GO:0000027">
    <property type="term" value="P:ribosomal large subunit assembly"/>
    <property type="evidence" value="ECO:0007669"/>
    <property type="project" value="UniProtKB-UniRule"/>
</dbReference>
<dbReference type="GO" id="GO:0006412">
    <property type="term" value="P:translation"/>
    <property type="evidence" value="ECO:0007669"/>
    <property type="project" value="InterPro"/>
</dbReference>
<dbReference type="CDD" id="cd07026">
    <property type="entry name" value="Ribosomal_L20"/>
    <property type="match status" value="1"/>
</dbReference>
<dbReference type="FunFam" id="1.10.1900.20:FF:000001">
    <property type="entry name" value="50S ribosomal protein L20"/>
    <property type="match status" value="1"/>
</dbReference>
<dbReference type="Gene3D" id="6.10.160.10">
    <property type="match status" value="1"/>
</dbReference>
<dbReference type="Gene3D" id="1.10.1900.20">
    <property type="entry name" value="Ribosomal protein L20"/>
    <property type="match status" value="1"/>
</dbReference>
<dbReference type="HAMAP" id="MF_00382">
    <property type="entry name" value="Ribosomal_bL20"/>
    <property type="match status" value="1"/>
</dbReference>
<dbReference type="InterPro" id="IPR005813">
    <property type="entry name" value="Ribosomal_bL20"/>
</dbReference>
<dbReference type="InterPro" id="IPR049946">
    <property type="entry name" value="RIBOSOMAL_L20_CS"/>
</dbReference>
<dbReference type="InterPro" id="IPR035566">
    <property type="entry name" value="Ribosomal_protein_bL20_C"/>
</dbReference>
<dbReference type="NCBIfam" id="TIGR01032">
    <property type="entry name" value="rplT_bact"/>
    <property type="match status" value="1"/>
</dbReference>
<dbReference type="PANTHER" id="PTHR10986">
    <property type="entry name" value="39S RIBOSOMAL PROTEIN L20"/>
    <property type="match status" value="1"/>
</dbReference>
<dbReference type="Pfam" id="PF00453">
    <property type="entry name" value="Ribosomal_L20"/>
    <property type="match status" value="1"/>
</dbReference>
<dbReference type="PRINTS" id="PR00062">
    <property type="entry name" value="RIBOSOMALL20"/>
</dbReference>
<dbReference type="SUPFAM" id="SSF74731">
    <property type="entry name" value="Ribosomal protein L20"/>
    <property type="match status" value="1"/>
</dbReference>
<dbReference type="PROSITE" id="PS00937">
    <property type="entry name" value="RIBOSOMAL_L20"/>
    <property type="match status" value="1"/>
</dbReference>
<sequence length="115" mass="13796">MRVKTGPTTRRRRKSWLKKAEGAWGINSTSYRNAKQTVMQASKYAYRDRKNKKRDFRKLWIARINAAIRKENYTYSAFMHKLKQKEIAINRKMLSELAIQNPEEFKKFVHSVMLK</sequence>
<proteinExistence type="inferred from homology"/>
<evidence type="ECO:0000255" key="1">
    <source>
        <dbReference type="HAMAP-Rule" id="MF_00382"/>
    </source>
</evidence>
<evidence type="ECO:0000305" key="2"/>
<comment type="function">
    <text evidence="1">Binds directly to 23S ribosomal RNA and is necessary for the in vitro assembly process of the 50S ribosomal subunit. It is not involved in the protein synthesizing functions of that subunit.</text>
</comment>
<comment type="similarity">
    <text evidence="1">Belongs to the bacterial ribosomal protein bL20 family.</text>
</comment>
<protein>
    <recommendedName>
        <fullName evidence="1">Large ribosomal subunit protein bL20</fullName>
    </recommendedName>
    <alternativeName>
        <fullName evidence="2">50S ribosomal protein L20</fullName>
    </alternativeName>
</protein>
<name>RL20_MALP2</name>